<sequence length="464" mass="49777">MEYLPLFHNLRGSRVLVVGGGEIALRKSRLLADAGAQLRVVAPEIEAQLQELIVASGGESLLRGYVEADLDGCTLIIAATDDESLNAQVSADAHRRCVPVNVVDAPALCSVIFPAIVDRSPLVIAVSSGGDAPVLARLIRAKLETWIPSTYGQLAGLAARFRAQVKGLFPDVQQRRAFWEDVFQGPIADRQLAGQGAEAERLLQAKIAGKAPHAPGEVYLVGAGPGDPDLLTFRALRLMQQADVVLYDRLVAPAILELCRRDAERIYVGKRRADHAVPQEQINQQLVTLAQQGKRVVRLKGGDPFIFGRGGEEIEELAAHGIPFQVVPGITAASGCSAYAGIPLTHRDYAQSVRFVTGHLKDGTSNLPWSDLVAPAQTLVFYMGLVGLPTICEQLIKHGRGADTPAALVQQGTTSNQRVFTGTLGNLPALVAEHEVHAPTLVIVGEVVQLREKLAWFEGAQSEV</sequence>
<comment type="function">
    <text evidence="1">Multifunctional enzyme that catalyzes the SAM-dependent methylations of uroporphyrinogen III at position C-2 and C-7 to form precorrin-2 via precorrin-1. Then it catalyzes the NAD-dependent ring dehydrogenation of precorrin-2 to yield sirohydrochlorin. Finally, it catalyzes the ferrochelation of sirohydrochlorin to yield siroheme.</text>
</comment>
<comment type="catalytic activity">
    <reaction evidence="1">
        <text>uroporphyrinogen III + 2 S-adenosyl-L-methionine = precorrin-2 + 2 S-adenosyl-L-homocysteine + H(+)</text>
        <dbReference type="Rhea" id="RHEA:32459"/>
        <dbReference type="ChEBI" id="CHEBI:15378"/>
        <dbReference type="ChEBI" id="CHEBI:57308"/>
        <dbReference type="ChEBI" id="CHEBI:57856"/>
        <dbReference type="ChEBI" id="CHEBI:58827"/>
        <dbReference type="ChEBI" id="CHEBI:59789"/>
        <dbReference type="EC" id="2.1.1.107"/>
    </reaction>
</comment>
<comment type="catalytic activity">
    <reaction evidence="1">
        <text>precorrin-2 + NAD(+) = sirohydrochlorin + NADH + 2 H(+)</text>
        <dbReference type="Rhea" id="RHEA:15613"/>
        <dbReference type="ChEBI" id="CHEBI:15378"/>
        <dbReference type="ChEBI" id="CHEBI:57540"/>
        <dbReference type="ChEBI" id="CHEBI:57945"/>
        <dbReference type="ChEBI" id="CHEBI:58351"/>
        <dbReference type="ChEBI" id="CHEBI:58827"/>
        <dbReference type="EC" id="1.3.1.76"/>
    </reaction>
</comment>
<comment type="catalytic activity">
    <reaction evidence="1">
        <text>siroheme + 2 H(+) = sirohydrochlorin + Fe(2+)</text>
        <dbReference type="Rhea" id="RHEA:24360"/>
        <dbReference type="ChEBI" id="CHEBI:15378"/>
        <dbReference type="ChEBI" id="CHEBI:29033"/>
        <dbReference type="ChEBI" id="CHEBI:58351"/>
        <dbReference type="ChEBI" id="CHEBI:60052"/>
        <dbReference type="EC" id="4.99.1.4"/>
    </reaction>
</comment>
<comment type="pathway">
    <text evidence="1">Cofactor biosynthesis; adenosylcobalamin biosynthesis; precorrin-2 from uroporphyrinogen III: step 1/1.</text>
</comment>
<comment type="pathway">
    <text evidence="1">Cofactor biosynthesis; adenosylcobalamin biosynthesis; sirohydrochlorin from precorrin-2: step 1/1.</text>
</comment>
<comment type="pathway">
    <text evidence="1">Porphyrin-containing compound metabolism; siroheme biosynthesis; precorrin-2 from uroporphyrinogen III: step 1/1.</text>
</comment>
<comment type="pathway">
    <text evidence="1">Porphyrin-containing compound metabolism; siroheme biosynthesis; siroheme from sirohydrochlorin: step 1/1.</text>
</comment>
<comment type="pathway">
    <text evidence="1">Porphyrin-containing compound metabolism; siroheme biosynthesis; sirohydrochlorin from precorrin-2: step 1/1.</text>
</comment>
<comment type="similarity">
    <text evidence="1">In the N-terminal section; belongs to the precorrin-2 dehydrogenase / sirohydrochlorin ferrochelatase family.</text>
</comment>
<comment type="similarity">
    <text evidence="1">In the C-terminal section; belongs to the precorrin methyltransferase family.</text>
</comment>
<accession>Q4K9V8</accession>
<reference key="1">
    <citation type="journal article" date="2005" name="Nat. Biotechnol.">
        <title>Complete genome sequence of the plant commensal Pseudomonas fluorescens Pf-5.</title>
        <authorList>
            <person name="Paulsen I.T."/>
            <person name="Press C.M."/>
            <person name="Ravel J."/>
            <person name="Kobayashi D.Y."/>
            <person name="Myers G.S.A."/>
            <person name="Mavrodi D.V."/>
            <person name="DeBoy R.T."/>
            <person name="Seshadri R."/>
            <person name="Ren Q."/>
            <person name="Madupu R."/>
            <person name="Dodson R.J."/>
            <person name="Durkin A.S."/>
            <person name="Brinkac L.M."/>
            <person name="Daugherty S.C."/>
            <person name="Sullivan S.A."/>
            <person name="Rosovitz M.J."/>
            <person name="Gwinn M.L."/>
            <person name="Zhou L."/>
            <person name="Schneider D.J."/>
            <person name="Cartinhour S.W."/>
            <person name="Nelson W.C."/>
            <person name="Weidman J."/>
            <person name="Watkins K."/>
            <person name="Tran K."/>
            <person name="Khouri H."/>
            <person name="Pierson E.A."/>
            <person name="Pierson L.S. III"/>
            <person name="Thomashow L.S."/>
            <person name="Loper J.E."/>
        </authorList>
    </citation>
    <scope>NUCLEOTIDE SEQUENCE [LARGE SCALE GENOMIC DNA]</scope>
    <source>
        <strain>ATCC BAA-477 / NRRL B-23932 / Pf-5</strain>
    </source>
</reference>
<proteinExistence type="inferred from homology"/>
<organism>
    <name type="scientific">Pseudomonas fluorescens (strain ATCC BAA-477 / NRRL B-23932 / Pf-5)</name>
    <dbReference type="NCBI Taxonomy" id="220664"/>
    <lineage>
        <taxon>Bacteria</taxon>
        <taxon>Pseudomonadati</taxon>
        <taxon>Pseudomonadota</taxon>
        <taxon>Gammaproteobacteria</taxon>
        <taxon>Pseudomonadales</taxon>
        <taxon>Pseudomonadaceae</taxon>
        <taxon>Pseudomonas</taxon>
    </lineage>
</organism>
<feature type="chain" id="PRO_0000330537" description="Siroheme synthase">
    <location>
        <begin position="1"/>
        <end position="464"/>
    </location>
</feature>
<feature type="region of interest" description="Precorrin-2 dehydrogenase /sirohydrochlorin ferrochelatase" evidence="1">
    <location>
        <begin position="1"/>
        <end position="203"/>
    </location>
</feature>
<feature type="region of interest" description="Uroporphyrinogen-III C-methyltransferase" evidence="1">
    <location>
        <begin position="216"/>
        <end position="464"/>
    </location>
</feature>
<feature type="active site" description="Proton acceptor" evidence="1">
    <location>
        <position position="248"/>
    </location>
</feature>
<feature type="active site" description="Proton donor" evidence="1">
    <location>
        <position position="270"/>
    </location>
</feature>
<feature type="binding site" evidence="1">
    <location>
        <begin position="22"/>
        <end position="23"/>
    </location>
    <ligand>
        <name>NAD(+)</name>
        <dbReference type="ChEBI" id="CHEBI:57540"/>
    </ligand>
</feature>
<feature type="binding site" evidence="1">
    <location>
        <begin position="43"/>
        <end position="44"/>
    </location>
    <ligand>
        <name>NAD(+)</name>
        <dbReference type="ChEBI" id="CHEBI:57540"/>
    </ligand>
</feature>
<feature type="binding site" evidence="1">
    <location>
        <position position="225"/>
    </location>
    <ligand>
        <name>S-adenosyl-L-methionine</name>
        <dbReference type="ChEBI" id="CHEBI:59789"/>
    </ligand>
</feature>
<feature type="binding site" evidence="1">
    <location>
        <begin position="301"/>
        <end position="303"/>
    </location>
    <ligand>
        <name>S-adenosyl-L-methionine</name>
        <dbReference type="ChEBI" id="CHEBI:59789"/>
    </ligand>
</feature>
<feature type="binding site" evidence="1">
    <location>
        <position position="306"/>
    </location>
    <ligand>
        <name>S-adenosyl-L-methionine</name>
        <dbReference type="ChEBI" id="CHEBI:59789"/>
    </ligand>
</feature>
<feature type="binding site" evidence="1">
    <location>
        <begin position="331"/>
        <end position="332"/>
    </location>
    <ligand>
        <name>S-adenosyl-L-methionine</name>
        <dbReference type="ChEBI" id="CHEBI:59789"/>
    </ligand>
</feature>
<feature type="binding site" evidence="1">
    <location>
        <position position="383"/>
    </location>
    <ligand>
        <name>S-adenosyl-L-methionine</name>
        <dbReference type="ChEBI" id="CHEBI:59789"/>
    </ligand>
</feature>
<feature type="binding site" evidence="1">
    <location>
        <position position="412"/>
    </location>
    <ligand>
        <name>S-adenosyl-L-methionine</name>
        <dbReference type="ChEBI" id="CHEBI:59789"/>
    </ligand>
</feature>
<feature type="modified residue" description="Phosphoserine" evidence="1">
    <location>
        <position position="128"/>
    </location>
</feature>
<protein>
    <recommendedName>
        <fullName evidence="1">Siroheme synthase</fullName>
    </recommendedName>
    <domain>
        <recommendedName>
            <fullName evidence="1">Uroporphyrinogen-III C-methyltransferase</fullName>
            <shortName evidence="1">Urogen III methylase</shortName>
            <ecNumber evidence="1">2.1.1.107</ecNumber>
        </recommendedName>
        <alternativeName>
            <fullName evidence="1">SUMT</fullName>
        </alternativeName>
        <alternativeName>
            <fullName evidence="1">Uroporphyrinogen III methylase</fullName>
            <shortName evidence="1">UROM</shortName>
        </alternativeName>
    </domain>
    <domain>
        <recommendedName>
            <fullName evidence="1">Precorrin-2 dehydrogenase</fullName>
            <ecNumber evidence="1">1.3.1.76</ecNumber>
        </recommendedName>
    </domain>
    <domain>
        <recommendedName>
            <fullName evidence="1">Sirohydrochlorin ferrochelatase</fullName>
            <ecNumber evidence="1">4.99.1.4</ecNumber>
        </recommendedName>
    </domain>
</protein>
<keyword id="KW-0169">Cobalamin biosynthesis</keyword>
<keyword id="KW-0456">Lyase</keyword>
<keyword id="KW-0489">Methyltransferase</keyword>
<keyword id="KW-0511">Multifunctional enzyme</keyword>
<keyword id="KW-0520">NAD</keyword>
<keyword id="KW-0560">Oxidoreductase</keyword>
<keyword id="KW-0597">Phosphoprotein</keyword>
<keyword id="KW-0627">Porphyrin biosynthesis</keyword>
<keyword id="KW-0949">S-adenosyl-L-methionine</keyword>
<keyword id="KW-0808">Transferase</keyword>
<dbReference type="EC" id="2.1.1.107" evidence="1"/>
<dbReference type="EC" id="1.3.1.76" evidence="1"/>
<dbReference type="EC" id="4.99.1.4" evidence="1"/>
<dbReference type="EMBL" id="CP000076">
    <property type="protein sequence ID" value="AAY93139.1"/>
    <property type="molecule type" value="Genomic_DNA"/>
</dbReference>
<dbReference type="RefSeq" id="WP_011062163.1">
    <property type="nucleotide sequence ID" value="NC_004129.6"/>
</dbReference>
<dbReference type="SMR" id="Q4K9V8"/>
<dbReference type="STRING" id="220664.PFL_3875"/>
<dbReference type="GeneID" id="57476942"/>
<dbReference type="KEGG" id="pfl:PFL_3875"/>
<dbReference type="PATRIC" id="fig|220664.5.peg.3970"/>
<dbReference type="eggNOG" id="COG0007">
    <property type="taxonomic scope" value="Bacteria"/>
</dbReference>
<dbReference type="eggNOG" id="COG1648">
    <property type="taxonomic scope" value="Bacteria"/>
</dbReference>
<dbReference type="HOGENOM" id="CLU_011276_1_0_6"/>
<dbReference type="UniPathway" id="UPA00148">
    <property type="reaction ID" value="UER00211"/>
</dbReference>
<dbReference type="UniPathway" id="UPA00148">
    <property type="reaction ID" value="UER00222"/>
</dbReference>
<dbReference type="UniPathway" id="UPA00262">
    <property type="reaction ID" value="UER00211"/>
</dbReference>
<dbReference type="UniPathway" id="UPA00262">
    <property type="reaction ID" value="UER00222"/>
</dbReference>
<dbReference type="UniPathway" id="UPA00262">
    <property type="reaction ID" value="UER00376"/>
</dbReference>
<dbReference type="Proteomes" id="UP000008540">
    <property type="component" value="Chromosome"/>
</dbReference>
<dbReference type="GO" id="GO:0051287">
    <property type="term" value="F:NAD binding"/>
    <property type="evidence" value="ECO:0007669"/>
    <property type="project" value="InterPro"/>
</dbReference>
<dbReference type="GO" id="GO:0043115">
    <property type="term" value="F:precorrin-2 dehydrogenase activity"/>
    <property type="evidence" value="ECO:0007669"/>
    <property type="project" value="UniProtKB-UniRule"/>
</dbReference>
<dbReference type="GO" id="GO:0051266">
    <property type="term" value="F:sirohydrochlorin ferrochelatase activity"/>
    <property type="evidence" value="ECO:0007669"/>
    <property type="project" value="UniProtKB-EC"/>
</dbReference>
<dbReference type="GO" id="GO:0004851">
    <property type="term" value="F:uroporphyrin-III C-methyltransferase activity"/>
    <property type="evidence" value="ECO:0007669"/>
    <property type="project" value="UniProtKB-UniRule"/>
</dbReference>
<dbReference type="GO" id="GO:0009236">
    <property type="term" value="P:cobalamin biosynthetic process"/>
    <property type="evidence" value="ECO:0007669"/>
    <property type="project" value="UniProtKB-UniRule"/>
</dbReference>
<dbReference type="GO" id="GO:0032259">
    <property type="term" value="P:methylation"/>
    <property type="evidence" value="ECO:0007669"/>
    <property type="project" value="UniProtKB-KW"/>
</dbReference>
<dbReference type="GO" id="GO:0019354">
    <property type="term" value="P:siroheme biosynthetic process"/>
    <property type="evidence" value="ECO:0007669"/>
    <property type="project" value="UniProtKB-UniRule"/>
</dbReference>
<dbReference type="CDD" id="cd11642">
    <property type="entry name" value="SUMT"/>
    <property type="match status" value="1"/>
</dbReference>
<dbReference type="FunFam" id="3.30.160.110:FF:000001">
    <property type="entry name" value="Siroheme synthase"/>
    <property type="match status" value="1"/>
</dbReference>
<dbReference type="FunFam" id="3.30.950.10:FF:000001">
    <property type="entry name" value="Siroheme synthase"/>
    <property type="match status" value="1"/>
</dbReference>
<dbReference type="FunFam" id="3.40.1010.10:FF:000001">
    <property type="entry name" value="Siroheme synthase"/>
    <property type="match status" value="1"/>
</dbReference>
<dbReference type="Gene3D" id="3.40.1010.10">
    <property type="entry name" value="Cobalt-precorrin-4 Transmethylase, Domain 1"/>
    <property type="match status" value="1"/>
</dbReference>
<dbReference type="Gene3D" id="3.30.950.10">
    <property type="entry name" value="Methyltransferase, Cobalt-precorrin-4 Transmethylase, Domain 2"/>
    <property type="match status" value="1"/>
</dbReference>
<dbReference type="Gene3D" id="3.40.50.720">
    <property type="entry name" value="NAD(P)-binding Rossmann-like Domain"/>
    <property type="match status" value="1"/>
</dbReference>
<dbReference type="Gene3D" id="1.10.8.210">
    <property type="entry name" value="Sirohaem synthase, dimerisation domain"/>
    <property type="match status" value="1"/>
</dbReference>
<dbReference type="Gene3D" id="3.30.160.110">
    <property type="entry name" value="Siroheme synthase, domain 2"/>
    <property type="match status" value="1"/>
</dbReference>
<dbReference type="HAMAP" id="MF_01646">
    <property type="entry name" value="Siroheme_synth"/>
    <property type="match status" value="1"/>
</dbReference>
<dbReference type="InterPro" id="IPR000878">
    <property type="entry name" value="4pyrrol_Mease"/>
</dbReference>
<dbReference type="InterPro" id="IPR035996">
    <property type="entry name" value="4pyrrol_Methylase_sf"/>
</dbReference>
<dbReference type="InterPro" id="IPR014777">
    <property type="entry name" value="4pyrrole_Mease_sub1"/>
</dbReference>
<dbReference type="InterPro" id="IPR014776">
    <property type="entry name" value="4pyrrole_Mease_sub2"/>
</dbReference>
<dbReference type="InterPro" id="IPR006366">
    <property type="entry name" value="CobA/CysG_C"/>
</dbReference>
<dbReference type="InterPro" id="IPR036291">
    <property type="entry name" value="NAD(P)-bd_dom_sf"/>
</dbReference>
<dbReference type="InterPro" id="IPR050161">
    <property type="entry name" value="Siro_Cobalamin_biosynth"/>
</dbReference>
<dbReference type="InterPro" id="IPR037115">
    <property type="entry name" value="Sirohaem_synt_dimer_dom_sf"/>
</dbReference>
<dbReference type="InterPro" id="IPR012409">
    <property type="entry name" value="Sirohaem_synth"/>
</dbReference>
<dbReference type="InterPro" id="IPR028281">
    <property type="entry name" value="Sirohaem_synthase_central"/>
</dbReference>
<dbReference type="InterPro" id="IPR019478">
    <property type="entry name" value="Sirohaem_synthase_dimer_dom"/>
</dbReference>
<dbReference type="InterPro" id="IPR006367">
    <property type="entry name" value="Sirohaem_synthase_N"/>
</dbReference>
<dbReference type="InterPro" id="IPR003043">
    <property type="entry name" value="Uropor_MeTrfase_CS"/>
</dbReference>
<dbReference type="NCBIfam" id="TIGR01469">
    <property type="entry name" value="cobA_cysG_Cterm"/>
    <property type="match status" value="1"/>
</dbReference>
<dbReference type="NCBIfam" id="TIGR01470">
    <property type="entry name" value="cysG_Nterm"/>
    <property type="match status" value="1"/>
</dbReference>
<dbReference type="NCBIfam" id="NF004790">
    <property type="entry name" value="PRK06136.1"/>
    <property type="match status" value="1"/>
</dbReference>
<dbReference type="NCBIfam" id="NF007922">
    <property type="entry name" value="PRK10637.1"/>
    <property type="match status" value="1"/>
</dbReference>
<dbReference type="PANTHER" id="PTHR45790:SF1">
    <property type="entry name" value="SIROHEME SYNTHASE"/>
    <property type="match status" value="1"/>
</dbReference>
<dbReference type="PANTHER" id="PTHR45790">
    <property type="entry name" value="SIROHEME SYNTHASE-RELATED"/>
    <property type="match status" value="1"/>
</dbReference>
<dbReference type="Pfam" id="PF10414">
    <property type="entry name" value="CysG_dimeriser"/>
    <property type="match status" value="1"/>
</dbReference>
<dbReference type="Pfam" id="PF13241">
    <property type="entry name" value="NAD_binding_7"/>
    <property type="match status" value="1"/>
</dbReference>
<dbReference type="Pfam" id="PF14824">
    <property type="entry name" value="Sirohm_synth_M"/>
    <property type="match status" value="1"/>
</dbReference>
<dbReference type="Pfam" id="PF00590">
    <property type="entry name" value="TP_methylase"/>
    <property type="match status" value="1"/>
</dbReference>
<dbReference type="PIRSF" id="PIRSF036426">
    <property type="entry name" value="Sirohaem_synth"/>
    <property type="match status" value="1"/>
</dbReference>
<dbReference type="SUPFAM" id="SSF51735">
    <property type="entry name" value="NAD(P)-binding Rossmann-fold domains"/>
    <property type="match status" value="1"/>
</dbReference>
<dbReference type="SUPFAM" id="SSF75615">
    <property type="entry name" value="Siroheme synthase middle domains-like"/>
    <property type="match status" value="1"/>
</dbReference>
<dbReference type="SUPFAM" id="SSF53790">
    <property type="entry name" value="Tetrapyrrole methylase"/>
    <property type="match status" value="1"/>
</dbReference>
<dbReference type="PROSITE" id="PS00840">
    <property type="entry name" value="SUMT_2"/>
    <property type="match status" value="1"/>
</dbReference>
<gene>
    <name evidence="1" type="primary">cysG</name>
    <name type="ordered locus">PFL_3875</name>
</gene>
<evidence type="ECO:0000255" key="1">
    <source>
        <dbReference type="HAMAP-Rule" id="MF_01646"/>
    </source>
</evidence>
<name>CYSG_PSEF5</name>